<proteinExistence type="inferred from homology"/>
<evidence type="ECO:0000255" key="1">
    <source>
        <dbReference type="HAMAP-Rule" id="MF_01601"/>
    </source>
</evidence>
<gene>
    <name evidence="1" type="primary">hldD</name>
    <name type="ordered locus">Bmul_2251</name>
    <name type="ordered locus">BMULJ_00988</name>
</gene>
<organism>
    <name type="scientific">Burkholderia multivorans (strain ATCC 17616 / 249)</name>
    <dbReference type="NCBI Taxonomy" id="395019"/>
    <lineage>
        <taxon>Bacteria</taxon>
        <taxon>Pseudomonadati</taxon>
        <taxon>Pseudomonadota</taxon>
        <taxon>Betaproteobacteria</taxon>
        <taxon>Burkholderiales</taxon>
        <taxon>Burkholderiaceae</taxon>
        <taxon>Burkholderia</taxon>
        <taxon>Burkholderia cepacia complex</taxon>
    </lineage>
</organism>
<sequence>MTLIVTGAAGFIGANIVKALNERGETRIIAVDNLTRADKFKNLVDCEIDDYLDKTEFVERFARGDFGKVRAVFHEGACSDTMETDGRYMMDNNFRYSRAVLDACLAQGAQFLYASSAAIYGGSTRFVEERSVEAPLNVYGYSKFLFDQVVRRVLPNAKSQIAGFRYFNVYGPRETHKGRMASVAFHNFNQFRAEGKVKLFGEYNGYAAGEQTRDFVSVEDVAKVNLFFFDHPEKSGIFNLGTGRAQPFNDIASTVVNTLRALDNLPPLTLAQQVEQGLIEYVPFPDALRGKYQCFTQADQTKLRAAGYDAPFLTVQEGVDRYVRWLSGQV</sequence>
<protein>
    <recommendedName>
        <fullName evidence="1">ADP-L-glycero-D-manno-heptose-6-epimerase</fullName>
        <ecNumber evidence="1">5.1.3.20</ecNumber>
    </recommendedName>
    <alternativeName>
        <fullName evidence="1">ADP-L-glycero-beta-D-manno-heptose-6-epimerase</fullName>
        <shortName evidence="1">ADP-glyceromanno-heptose 6-epimerase</shortName>
        <shortName evidence="1">ADP-hep 6-epimerase</shortName>
        <shortName evidence="1">AGME</shortName>
    </alternativeName>
</protein>
<keyword id="KW-0119">Carbohydrate metabolism</keyword>
<keyword id="KW-0413">Isomerase</keyword>
<keyword id="KW-0521">NADP</keyword>
<keyword id="KW-1185">Reference proteome</keyword>
<accession>A9ADU8</accession>
<feature type="chain" id="PRO_1000190398" description="ADP-L-glycero-D-manno-heptose-6-epimerase">
    <location>
        <begin position="1"/>
        <end position="330"/>
    </location>
</feature>
<feature type="active site" description="Proton acceptor" evidence="1">
    <location>
        <position position="139"/>
    </location>
</feature>
<feature type="active site" description="Proton acceptor" evidence="1">
    <location>
        <position position="177"/>
    </location>
</feature>
<feature type="binding site" evidence="1">
    <location>
        <begin position="11"/>
        <end position="12"/>
    </location>
    <ligand>
        <name>NADP(+)</name>
        <dbReference type="ChEBI" id="CHEBI:58349"/>
    </ligand>
</feature>
<feature type="binding site" evidence="1">
    <location>
        <begin position="32"/>
        <end position="33"/>
    </location>
    <ligand>
        <name>NADP(+)</name>
        <dbReference type="ChEBI" id="CHEBI:58349"/>
    </ligand>
</feature>
<feature type="binding site" evidence="1">
    <location>
        <position position="39"/>
    </location>
    <ligand>
        <name>NADP(+)</name>
        <dbReference type="ChEBI" id="CHEBI:58349"/>
    </ligand>
</feature>
<feature type="binding site" evidence="1">
    <location>
        <position position="54"/>
    </location>
    <ligand>
        <name>NADP(+)</name>
        <dbReference type="ChEBI" id="CHEBI:58349"/>
    </ligand>
</feature>
<feature type="binding site" evidence="1">
    <location>
        <begin position="75"/>
        <end position="79"/>
    </location>
    <ligand>
        <name>NADP(+)</name>
        <dbReference type="ChEBI" id="CHEBI:58349"/>
    </ligand>
</feature>
<feature type="binding site" evidence="1">
    <location>
        <position position="92"/>
    </location>
    <ligand>
        <name>NADP(+)</name>
        <dbReference type="ChEBI" id="CHEBI:58349"/>
    </ligand>
</feature>
<feature type="binding site" evidence="1">
    <location>
        <position position="143"/>
    </location>
    <ligand>
        <name>NADP(+)</name>
        <dbReference type="ChEBI" id="CHEBI:58349"/>
    </ligand>
</feature>
<feature type="binding site" evidence="1">
    <location>
        <position position="168"/>
    </location>
    <ligand>
        <name>substrate</name>
    </ligand>
</feature>
<feature type="binding site" evidence="1">
    <location>
        <position position="169"/>
    </location>
    <ligand>
        <name>NADP(+)</name>
        <dbReference type="ChEBI" id="CHEBI:58349"/>
    </ligand>
</feature>
<feature type="binding site" evidence="1">
    <location>
        <position position="177"/>
    </location>
    <ligand>
        <name>NADP(+)</name>
        <dbReference type="ChEBI" id="CHEBI:58349"/>
    </ligand>
</feature>
<feature type="binding site" evidence="1">
    <location>
        <position position="179"/>
    </location>
    <ligand>
        <name>substrate</name>
    </ligand>
</feature>
<feature type="binding site" evidence="1">
    <location>
        <position position="186"/>
    </location>
    <ligand>
        <name>substrate</name>
    </ligand>
</feature>
<feature type="binding site" evidence="1">
    <location>
        <begin position="200"/>
        <end position="203"/>
    </location>
    <ligand>
        <name>substrate</name>
    </ligand>
</feature>
<feature type="binding site" evidence="1">
    <location>
        <position position="213"/>
    </location>
    <ligand>
        <name>substrate</name>
    </ligand>
</feature>
<feature type="binding site" evidence="1">
    <location>
        <position position="292"/>
    </location>
    <ligand>
        <name>substrate</name>
    </ligand>
</feature>
<name>HLDD_BURM1</name>
<comment type="function">
    <text evidence="1">Catalyzes the interconversion between ADP-D-glycero-beta-D-manno-heptose and ADP-L-glycero-beta-D-manno-heptose via an epimerization at carbon 6 of the heptose.</text>
</comment>
<comment type="catalytic activity">
    <reaction evidence="1">
        <text>ADP-D-glycero-beta-D-manno-heptose = ADP-L-glycero-beta-D-manno-heptose</text>
        <dbReference type="Rhea" id="RHEA:17577"/>
        <dbReference type="ChEBI" id="CHEBI:59967"/>
        <dbReference type="ChEBI" id="CHEBI:61506"/>
        <dbReference type="EC" id="5.1.3.20"/>
    </reaction>
</comment>
<comment type="cofactor">
    <cofactor evidence="1">
        <name>NADP(+)</name>
        <dbReference type="ChEBI" id="CHEBI:58349"/>
    </cofactor>
    <text evidence="1">Binds 1 NADP(+) per subunit.</text>
</comment>
<comment type="pathway">
    <text evidence="1">Nucleotide-sugar biosynthesis; ADP-L-glycero-beta-D-manno-heptose biosynthesis; ADP-L-glycero-beta-D-manno-heptose from D-glycero-beta-D-manno-heptose 7-phosphate: step 4/4.</text>
</comment>
<comment type="subunit">
    <text evidence="1">Homopentamer.</text>
</comment>
<comment type="domain">
    <text evidence="1">Contains a large N-terminal NADP-binding domain, and a smaller C-terminal substrate-binding domain.</text>
</comment>
<comment type="similarity">
    <text evidence="1">Belongs to the NAD(P)-dependent epimerase/dehydratase family. HldD subfamily.</text>
</comment>
<dbReference type="EC" id="5.1.3.20" evidence="1"/>
<dbReference type="EMBL" id="CP000868">
    <property type="protein sequence ID" value="ABX15936.1"/>
    <property type="molecule type" value="Genomic_DNA"/>
</dbReference>
<dbReference type="EMBL" id="AP009385">
    <property type="protein sequence ID" value="BAG42934.1"/>
    <property type="molecule type" value="Genomic_DNA"/>
</dbReference>
<dbReference type="SMR" id="A9ADU8"/>
<dbReference type="STRING" id="395019.BMULJ_00988"/>
<dbReference type="KEGG" id="bmj:BMULJ_00988"/>
<dbReference type="KEGG" id="bmu:Bmul_2251"/>
<dbReference type="eggNOG" id="COG0451">
    <property type="taxonomic scope" value="Bacteria"/>
</dbReference>
<dbReference type="HOGENOM" id="CLU_007383_1_3_4"/>
<dbReference type="UniPathway" id="UPA00356">
    <property type="reaction ID" value="UER00440"/>
</dbReference>
<dbReference type="Proteomes" id="UP000008815">
    <property type="component" value="Chromosome 1"/>
</dbReference>
<dbReference type="GO" id="GO:0008712">
    <property type="term" value="F:ADP-glyceromanno-heptose 6-epimerase activity"/>
    <property type="evidence" value="ECO:0007669"/>
    <property type="project" value="UniProtKB-UniRule"/>
</dbReference>
<dbReference type="GO" id="GO:0050661">
    <property type="term" value="F:NADP binding"/>
    <property type="evidence" value="ECO:0007669"/>
    <property type="project" value="InterPro"/>
</dbReference>
<dbReference type="GO" id="GO:0097171">
    <property type="term" value="P:ADP-L-glycero-beta-D-manno-heptose biosynthetic process"/>
    <property type="evidence" value="ECO:0007669"/>
    <property type="project" value="UniProtKB-UniPathway"/>
</dbReference>
<dbReference type="GO" id="GO:0005975">
    <property type="term" value="P:carbohydrate metabolic process"/>
    <property type="evidence" value="ECO:0007669"/>
    <property type="project" value="UniProtKB-UniRule"/>
</dbReference>
<dbReference type="CDD" id="cd05248">
    <property type="entry name" value="ADP_GME_SDR_e"/>
    <property type="match status" value="1"/>
</dbReference>
<dbReference type="Gene3D" id="3.40.50.720">
    <property type="entry name" value="NAD(P)-binding Rossmann-like Domain"/>
    <property type="match status" value="1"/>
</dbReference>
<dbReference type="Gene3D" id="3.90.25.10">
    <property type="entry name" value="UDP-galactose 4-epimerase, domain 1"/>
    <property type="match status" value="1"/>
</dbReference>
<dbReference type="HAMAP" id="MF_01601">
    <property type="entry name" value="Heptose_epimerase"/>
    <property type="match status" value="1"/>
</dbReference>
<dbReference type="InterPro" id="IPR001509">
    <property type="entry name" value="Epimerase_deHydtase"/>
</dbReference>
<dbReference type="InterPro" id="IPR011912">
    <property type="entry name" value="Heptose_epim"/>
</dbReference>
<dbReference type="InterPro" id="IPR036291">
    <property type="entry name" value="NAD(P)-bd_dom_sf"/>
</dbReference>
<dbReference type="NCBIfam" id="TIGR02197">
    <property type="entry name" value="heptose_epim"/>
    <property type="match status" value="1"/>
</dbReference>
<dbReference type="PANTHER" id="PTHR43103:SF3">
    <property type="entry name" value="ADP-L-GLYCERO-D-MANNO-HEPTOSE-6-EPIMERASE"/>
    <property type="match status" value="1"/>
</dbReference>
<dbReference type="PANTHER" id="PTHR43103">
    <property type="entry name" value="NUCLEOSIDE-DIPHOSPHATE-SUGAR EPIMERASE"/>
    <property type="match status" value="1"/>
</dbReference>
<dbReference type="Pfam" id="PF01370">
    <property type="entry name" value="Epimerase"/>
    <property type="match status" value="1"/>
</dbReference>
<dbReference type="SUPFAM" id="SSF51735">
    <property type="entry name" value="NAD(P)-binding Rossmann-fold domains"/>
    <property type="match status" value="1"/>
</dbReference>
<reference key="1">
    <citation type="submission" date="2007-10" db="EMBL/GenBank/DDBJ databases">
        <title>Complete sequence of chromosome 1 of Burkholderia multivorans ATCC 17616.</title>
        <authorList>
            <person name="Copeland A."/>
            <person name="Lucas S."/>
            <person name="Lapidus A."/>
            <person name="Barry K."/>
            <person name="Glavina del Rio T."/>
            <person name="Dalin E."/>
            <person name="Tice H."/>
            <person name="Pitluck S."/>
            <person name="Chain P."/>
            <person name="Malfatti S."/>
            <person name="Shin M."/>
            <person name="Vergez L."/>
            <person name="Schmutz J."/>
            <person name="Larimer F."/>
            <person name="Land M."/>
            <person name="Hauser L."/>
            <person name="Kyrpides N."/>
            <person name="Kim E."/>
            <person name="Tiedje J."/>
            <person name="Richardson P."/>
        </authorList>
    </citation>
    <scope>NUCLEOTIDE SEQUENCE [LARGE SCALE GENOMIC DNA]</scope>
    <source>
        <strain>ATCC 17616 / 249</strain>
    </source>
</reference>
<reference key="2">
    <citation type="submission" date="2007-04" db="EMBL/GenBank/DDBJ databases">
        <title>Complete genome sequence of Burkholderia multivorans ATCC 17616.</title>
        <authorList>
            <person name="Ohtsubo Y."/>
            <person name="Yamashita A."/>
            <person name="Kurokawa K."/>
            <person name="Takami H."/>
            <person name="Yuhara S."/>
            <person name="Nishiyama E."/>
            <person name="Endo R."/>
            <person name="Miyazaki R."/>
            <person name="Ono A."/>
            <person name="Yano K."/>
            <person name="Ito M."/>
            <person name="Sota M."/>
            <person name="Yuji N."/>
            <person name="Hattori M."/>
            <person name="Tsuda M."/>
        </authorList>
    </citation>
    <scope>NUCLEOTIDE SEQUENCE [LARGE SCALE GENOMIC DNA]</scope>
    <source>
        <strain>ATCC 17616 / 249</strain>
    </source>
</reference>